<evidence type="ECO:0000255" key="1">
    <source>
        <dbReference type="HAMAP-Rule" id="MF_00203"/>
    </source>
</evidence>
<evidence type="ECO:0000305" key="2"/>
<name>UVRC_PSET1</name>
<comment type="function">
    <text evidence="1">The UvrABC repair system catalyzes the recognition and processing of DNA lesions. UvrC both incises the 5' and 3' sides of the lesion. The N-terminal half is responsible for the 3' incision and the C-terminal half is responsible for the 5' incision.</text>
</comment>
<comment type="subunit">
    <text evidence="1">Interacts with UvrB in an incision complex.</text>
</comment>
<comment type="subcellular location">
    <subcellularLocation>
        <location evidence="1">Cytoplasm</location>
    </subcellularLocation>
</comment>
<comment type="similarity">
    <text evidence="1">Belongs to the UvrC family.</text>
</comment>
<comment type="sequence caution" evidence="2">
    <conflict type="erroneous initiation">
        <sequence resource="EMBL-CDS" id="CAI86979"/>
    </conflict>
</comment>
<reference key="1">
    <citation type="journal article" date="2005" name="Genome Res.">
        <title>Coping with cold: the genome of the versatile marine Antarctica bacterium Pseudoalteromonas haloplanktis TAC125.</title>
        <authorList>
            <person name="Medigue C."/>
            <person name="Krin E."/>
            <person name="Pascal G."/>
            <person name="Barbe V."/>
            <person name="Bernsel A."/>
            <person name="Bertin P.N."/>
            <person name="Cheung F."/>
            <person name="Cruveiller S."/>
            <person name="D'Amico S."/>
            <person name="Duilio A."/>
            <person name="Fang G."/>
            <person name="Feller G."/>
            <person name="Ho C."/>
            <person name="Mangenot S."/>
            <person name="Marino G."/>
            <person name="Nilsson J."/>
            <person name="Parrilli E."/>
            <person name="Rocha E.P.C."/>
            <person name="Rouy Z."/>
            <person name="Sekowska A."/>
            <person name="Tutino M.L."/>
            <person name="Vallenet D."/>
            <person name="von Heijne G."/>
            <person name="Danchin A."/>
        </authorList>
    </citation>
    <scope>NUCLEOTIDE SEQUENCE [LARGE SCALE GENOMIC DNA]</scope>
    <source>
        <strain>TAC 125</strain>
    </source>
</reference>
<feature type="chain" id="PRO_0000264927" description="UvrABC system protein C">
    <location>
        <begin position="1"/>
        <end position="607"/>
    </location>
</feature>
<feature type="domain" description="GIY-YIG" evidence="1">
    <location>
        <begin position="15"/>
        <end position="93"/>
    </location>
</feature>
<feature type="domain" description="UVR" evidence="1">
    <location>
        <begin position="202"/>
        <end position="237"/>
    </location>
</feature>
<protein>
    <recommendedName>
        <fullName evidence="1">UvrABC system protein C</fullName>
        <shortName evidence="1">Protein UvrC</shortName>
    </recommendedName>
    <alternativeName>
        <fullName evidence="1">Excinuclease ABC subunit C</fullName>
    </alternativeName>
</protein>
<proteinExistence type="inferred from homology"/>
<accession>Q3IIM0</accession>
<keyword id="KW-0963">Cytoplasm</keyword>
<keyword id="KW-0227">DNA damage</keyword>
<keyword id="KW-0228">DNA excision</keyword>
<keyword id="KW-0234">DNA repair</keyword>
<keyword id="KW-0267">Excision nuclease</keyword>
<keyword id="KW-1185">Reference proteome</keyword>
<keyword id="KW-0742">SOS response</keyword>
<sequence length="607" mass="68740">MSEFDHVQFLKTLSSEPGVYCMLDSDNQVIYVGKAKHLKKRVSSYFRSNITDSKTRVLVSNICNVEVTLTNTETEALLLENNLIKKYQPRYNILLRDDKSYPYILLTNHKHPRLAFHRGSRKVKGEYFGPFPSAGAVSESLRLMQKIFPIRQCEDVYYRARSRPCLQYQLKRCSAPCVNKVSDEDYTEQVDYVRKFLTGKSHEVIADLIKKMEAASQQLNFELAAKVRDQIMLLRKMQEQQSISGNFAEMDVVGFAHLNGLNGIHLLMIRDHKVLGSKTYFPKVPKDSSEQEILTSFLGQYYLAPGATGRIAKEIILPFEIQESDVLGQALTQISERKVTLKVVTRGERAQYLQLANKNALNSITVKQSTQDSINKRYAQLKATLRLDDITRMECFDISHTMGENTVASCVVFDSQGPNTKEYRRYNVTGITGGDDYAAMEFALNKRYNKLVDEDKIPDVIFIDGGKGQLGRAEQYFATWPHAKMPLLVGVAKGTSRKPGLETLLIDGGRKTIPMDSDAPALHLIQHIRDESHRFAIAGHRNKRQKQRTQSLLEEINGVGAKRRQTLLKYLGGMQGVKAANIEQLKKVPGISPDMADKIFNHLHDKG</sequence>
<gene>
    <name evidence="1" type="primary">uvrC</name>
    <name type="ordered locus">PSHAa1915</name>
</gene>
<dbReference type="EMBL" id="CR954246">
    <property type="protein sequence ID" value="CAI86979.1"/>
    <property type="status" value="ALT_INIT"/>
    <property type="molecule type" value="Genomic_DNA"/>
</dbReference>
<dbReference type="SMR" id="Q3IIM0"/>
<dbReference type="STRING" id="326442.PSHAa1915"/>
<dbReference type="KEGG" id="pha:PSHAa1915"/>
<dbReference type="PATRIC" id="fig|326442.8.peg.1854"/>
<dbReference type="eggNOG" id="COG0322">
    <property type="taxonomic scope" value="Bacteria"/>
</dbReference>
<dbReference type="HOGENOM" id="CLU_014841_3_2_6"/>
<dbReference type="BioCyc" id="PHAL326442:PSHA_RS09460-MONOMER"/>
<dbReference type="Proteomes" id="UP000006843">
    <property type="component" value="Chromosome I"/>
</dbReference>
<dbReference type="GO" id="GO:0005737">
    <property type="term" value="C:cytoplasm"/>
    <property type="evidence" value="ECO:0007669"/>
    <property type="project" value="UniProtKB-SubCell"/>
</dbReference>
<dbReference type="GO" id="GO:0009380">
    <property type="term" value="C:excinuclease repair complex"/>
    <property type="evidence" value="ECO:0007669"/>
    <property type="project" value="InterPro"/>
</dbReference>
<dbReference type="GO" id="GO:0003677">
    <property type="term" value="F:DNA binding"/>
    <property type="evidence" value="ECO:0007669"/>
    <property type="project" value="UniProtKB-UniRule"/>
</dbReference>
<dbReference type="GO" id="GO:0009381">
    <property type="term" value="F:excinuclease ABC activity"/>
    <property type="evidence" value="ECO:0007669"/>
    <property type="project" value="UniProtKB-UniRule"/>
</dbReference>
<dbReference type="GO" id="GO:0006289">
    <property type="term" value="P:nucleotide-excision repair"/>
    <property type="evidence" value="ECO:0007669"/>
    <property type="project" value="UniProtKB-UniRule"/>
</dbReference>
<dbReference type="GO" id="GO:0009432">
    <property type="term" value="P:SOS response"/>
    <property type="evidence" value="ECO:0007669"/>
    <property type="project" value="UniProtKB-UniRule"/>
</dbReference>
<dbReference type="CDD" id="cd10434">
    <property type="entry name" value="GIY-YIG_UvrC_Cho"/>
    <property type="match status" value="1"/>
</dbReference>
<dbReference type="FunFam" id="3.30.420.340:FF:000001">
    <property type="entry name" value="UvrABC system protein C"/>
    <property type="match status" value="1"/>
</dbReference>
<dbReference type="FunFam" id="3.40.1440.10:FF:000001">
    <property type="entry name" value="UvrABC system protein C"/>
    <property type="match status" value="1"/>
</dbReference>
<dbReference type="Gene3D" id="1.10.150.20">
    <property type="entry name" value="5' to 3' exonuclease, C-terminal subdomain"/>
    <property type="match status" value="1"/>
</dbReference>
<dbReference type="Gene3D" id="3.40.1440.10">
    <property type="entry name" value="GIY-YIG endonuclease"/>
    <property type="match status" value="1"/>
</dbReference>
<dbReference type="Gene3D" id="4.10.860.10">
    <property type="entry name" value="UVR domain"/>
    <property type="match status" value="1"/>
</dbReference>
<dbReference type="Gene3D" id="3.30.420.340">
    <property type="entry name" value="UvrC, RNAse H endonuclease domain"/>
    <property type="match status" value="1"/>
</dbReference>
<dbReference type="HAMAP" id="MF_00203">
    <property type="entry name" value="UvrC"/>
    <property type="match status" value="1"/>
</dbReference>
<dbReference type="InterPro" id="IPR000305">
    <property type="entry name" value="GIY-YIG_endonuc"/>
</dbReference>
<dbReference type="InterPro" id="IPR035901">
    <property type="entry name" value="GIY-YIG_endonuc_sf"/>
</dbReference>
<dbReference type="InterPro" id="IPR047296">
    <property type="entry name" value="GIY-YIG_UvrC_Cho"/>
</dbReference>
<dbReference type="InterPro" id="IPR003583">
    <property type="entry name" value="Hlx-hairpin-Hlx_DNA-bd_motif"/>
</dbReference>
<dbReference type="InterPro" id="IPR010994">
    <property type="entry name" value="RuvA_2-like"/>
</dbReference>
<dbReference type="InterPro" id="IPR001943">
    <property type="entry name" value="UVR_dom"/>
</dbReference>
<dbReference type="InterPro" id="IPR036876">
    <property type="entry name" value="UVR_dom_sf"/>
</dbReference>
<dbReference type="InterPro" id="IPR050066">
    <property type="entry name" value="UvrABC_protein_C"/>
</dbReference>
<dbReference type="InterPro" id="IPR004791">
    <property type="entry name" value="UvrC"/>
</dbReference>
<dbReference type="InterPro" id="IPR001162">
    <property type="entry name" value="UvrC_RNase_H_dom"/>
</dbReference>
<dbReference type="InterPro" id="IPR038476">
    <property type="entry name" value="UvrC_RNase_H_dom_sf"/>
</dbReference>
<dbReference type="NCBIfam" id="TIGR00194">
    <property type="entry name" value="uvrC"/>
    <property type="match status" value="1"/>
</dbReference>
<dbReference type="PANTHER" id="PTHR30562:SF1">
    <property type="entry name" value="UVRABC SYSTEM PROTEIN C"/>
    <property type="match status" value="1"/>
</dbReference>
<dbReference type="PANTHER" id="PTHR30562">
    <property type="entry name" value="UVRC/OXIDOREDUCTASE"/>
    <property type="match status" value="1"/>
</dbReference>
<dbReference type="Pfam" id="PF01541">
    <property type="entry name" value="GIY-YIG"/>
    <property type="match status" value="1"/>
</dbReference>
<dbReference type="Pfam" id="PF14520">
    <property type="entry name" value="HHH_5"/>
    <property type="match status" value="1"/>
</dbReference>
<dbReference type="Pfam" id="PF02151">
    <property type="entry name" value="UVR"/>
    <property type="match status" value="1"/>
</dbReference>
<dbReference type="Pfam" id="PF22920">
    <property type="entry name" value="UvrC_RNaseH"/>
    <property type="match status" value="1"/>
</dbReference>
<dbReference type="Pfam" id="PF08459">
    <property type="entry name" value="UvrC_RNaseH_dom"/>
    <property type="match status" value="1"/>
</dbReference>
<dbReference type="SMART" id="SM00465">
    <property type="entry name" value="GIYc"/>
    <property type="match status" value="1"/>
</dbReference>
<dbReference type="SMART" id="SM00278">
    <property type="entry name" value="HhH1"/>
    <property type="match status" value="2"/>
</dbReference>
<dbReference type="SUPFAM" id="SSF46600">
    <property type="entry name" value="C-terminal UvrC-binding domain of UvrB"/>
    <property type="match status" value="1"/>
</dbReference>
<dbReference type="SUPFAM" id="SSF82771">
    <property type="entry name" value="GIY-YIG endonuclease"/>
    <property type="match status" value="1"/>
</dbReference>
<dbReference type="SUPFAM" id="SSF47781">
    <property type="entry name" value="RuvA domain 2-like"/>
    <property type="match status" value="1"/>
</dbReference>
<dbReference type="PROSITE" id="PS50164">
    <property type="entry name" value="GIY_YIG"/>
    <property type="match status" value="1"/>
</dbReference>
<dbReference type="PROSITE" id="PS50151">
    <property type="entry name" value="UVR"/>
    <property type="match status" value="1"/>
</dbReference>
<dbReference type="PROSITE" id="PS50165">
    <property type="entry name" value="UVRC"/>
    <property type="match status" value="1"/>
</dbReference>
<organism>
    <name type="scientific">Pseudoalteromonas translucida (strain TAC 125)</name>
    <dbReference type="NCBI Taxonomy" id="326442"/>
    <lineage>
        <taxon>Bacteria</taxon>
        <taxon>Pseudomonadati</taxon>
        <taxon>Pseudomonadota</taxon>
        <taxon>Gammaproteobacteria</taxon>
        <taxon>Alteromonadales</taxon>
        <taxon>Pseudoalteromonadaceae</taxon>
        <taxon>Pseudoalteromonas</taxon>
    </lineage>
</organism>